<reference key="1">
    <citation type="journal article" date="2007" name="PLoS Genet.">
        <title>Patterns and implications of gene gain and loss in the evolution of Prochlorococcus.</title>
        <authorList>
            <person name="Kettler G.C."/>
            <person name="Martiny A.C."/>
            <person name="Huang K."/>
            <person name="Zucker J."/>
            <person name="Coleman M.L."/>
            <person name="Rodrigue S."/>
            <person name="Chen F."/>
            <person name="Lapidus A."/>
            <person name="Ferriera S."/>
            <person name="Johnson J."/>
            <person name="Steglich C."/>
            <person name="Church G.M."/>
            <person name="Richardson P."/>
            <person name="Chisholm S.W."/>
        </authorList>
    </citation>
    <scope>NUCLEOTIDE SEQUENCE [LARGE SCALE GENOMIC DNA]</scope>
    <source>
        <strain>MIT 9215</strain>
    </source>
</reference>
<proteinExistence type="inferred from homology"/>
<gene>
    <name evidence="1" type="primary">psb28</name>
    <name type="ordered locus">P9215_09641</name>
</gene>
<keyword id="KW-0472">Membrane</keyword>
<keyword id="KW-0602">Photosynthesis</keyword>
<keyword id="KW-0604">Photosystem II</keyword>
<keyword id="KW-0793">Thylakoid</keyword>
<evidence type="ECO:0000255" key="1">
    <source>
        <dbReference type="HAMAP-Rule" id="MF_01370"/>
    </source>
</evidence>
<name>PSB28_PROM2</name>
<organism>
    <name type="scientific">Prochlorococcus marinus (strain MIT 9215)</name>
    <dbReference type="NCBI Taxonomy" id="93060"/>
    <lineage>
        <taxon>Bacteria</taxon>
        <taxon>Bacillati</taxon>
        <taxon>Cyanobacteriota</taxon>
        <taxon>Cyanophyceae</taxon>
        <taxon>Synechococcales</taxon>
        <taxon>Prochlorococcaceae</taxon>
        <taxon>Prochlorococcus</taxon>
    </lineage>
</organism>
<accession>A8G4P8</accession>
<sequence>MTANKTAKIQFYEGTDEPVVPEIRLTRSKDGTTGQALFLFEKPQALSSITDGEITGMRMIDSEGEILTKEVKVKFVDGEPIYLEAVYIWKNSSDFDRFMRFANSYAKSNGLGYSEKK</sequence>
<feature type="chain" id="PRO_1000068187" description="Photosystem II reaction center Psb28 protein">
    <location>
        <begin position="1"/>
        <end position="117"/>
    </location>
</feature>
<dbReference type="EMBL" id="CP000825">
    <property type="protein sequence ID" value="ABV50579.1"/>
    <property type="molecule type" value="Genomic_DNA"/>
</dbReference>
<dbReference type="RefSeq" id="WP_012007670.1">
    <property type="nucleotide sequence ID" value="NC_009840.1"/>
</dbReference>
<dbReference type="SMR" id="A8G4P8"/>
<dbReference type="STRING" id="93060.P9215_09641"/>
<dbReference type="KEGG" id="pmh:P9215_09641"/>
<dbReference type="eggNOG" id="ENOG5031GDS">
    <property type="taxonomic scope" value="Bacteria"/>
</dbReference>
<dbReference type="HOGENOM" id="CLU_137323_1_0_3"/>
<dbReference type="OrthoDB" id="559598at2"/>
<dbReference type="Proteomes" id="UP000002014">
    <property type="component" value="Chromosome"/>
</dbReference>
<dbReference type="GO" id="GO:0009654">
    <property type="term" value="C:photosystem II oxygen evolving complex"/>
    <property type="evidence" value="ECO:0007669"/>
    <property type="project" value="InterPro"/>
</dbReference>
<dbReference type="GO" id="GO:0031676">
    <property type="term" value="C:plasma membrane-derived thylakoid membrane"/>
    <property type="evidence" value="ECO:0007669"/>
    <property type="project" value="UniProtKB-SubCell"/>
</dbReference>
<dbReference type="GO" id="GO:0015979">
    <property type="term" value="P:photosynthesis"/>
    <property type="evidence" value="ECO:0007669"/>
    <property type="project" value="UniProtKB-UniRule"/>
</dbReference>
<dbReference type="Gene3D" id="2.40.30.220">
    <property type="entry name" value="Photosystem II Psb28"/>
    <property type="match status" value="1"/>
</dbReference>
<dbReference type="HAMAP" id="MF_01370">
    <property type="entry name" value="PSII_Psb28"/>
    <property type="match status" value="1"/>
</dbReference>
<dbReference type="InterPro" id="IPR038676">
    <property type="entry name" value="Psb28_c1_sf"/>
</dbReference>
<dbReference type="InterPro" id="IPR005610">
    <property type="entry name" value="PSII_Psb28_class-1"/>
</dbReference>
<dbReference type="NCBIfam" id="TIGR03047">
    <property type="entry name" value="PS_II_psb28"/>
    <property type="match status" value="1"/>
</dbReference>
<dbReference type="PANTHER" id="PTHR34963">
    <property type="match status" value="1"/>
</dbReference>
<dbReference type="PANTHER" id="PTHR34963:SF2">
    <property type="entry name" value="PHOTOSYSTEM II REACTION CENTER PSB28 PROTEIN, CHLOROPLASTIC"/>
    <property type="match status" value="1"/>
</dbReference>
<dbReference type="Pfam" id="PF03912">
    <property type="entry name" value="Psb28"/>
    <property type="match status" value="1"/>
</dbReference>
<comment type="subunit">
    <text evidence="1">Part of the photosystem II complex.</text>
</comment>
<comment type="subcellular location">
    <subcellularLocation>
        <location evidence="1">Cellular thylakoid membrane</location>
        <topology evidence="1">Peripheral membrane protein</topology>
        <orientation evidence="1">Cytoplasmic side</orientation>
    </subcellularLocation>
</comment>
<comment type="similarity">
    <text evidence="1">Belongs to the Psb28 family.</text>
</comment>
<protein>
    <recommendedName>
        <fullName evidence="1">Photosystem II reaction center Psb28 protein</fullName>
    </recommendedName>
    <alternativeName>
        <fullName evidence="1">Photosystem II 13 kDa protein</fullName>
    </alternativeName>
    <alternativeName>
        <fullName evidence="1">Photosystem II reaction center W protein</fullName>
    </alternativeName>
</protein>